<name>DAPB_METM5</name>
<dbReference type="EC" id="1.17.1.8" evidence="1"/>
<dbReference type="EMBL" id="CP000609">
    <property type="protein sequence ID" value="ABO35040.1"/>
    <property type="molecule type" value="Genomic_DNA"/>
</dbReference>
<dbReference type="RefSeq" id="WP_011868494.1">
    <property type="nucleotide sequence ID" value="NC_009135.1"/>
</dbReference>
<dbReference type="SMR" id="A4FXV6"/>
<dbReference type="STRING" id="402880.MmarC5_0730"/>
<dbReference type="GeneID" id="4928831"/>
<dbReference type="KEGG" id="mmq:MmarC5_0730"/>
<dbReference type="eggNOG" id="arCOG04393">
    <property type="taxonomic scope" value="Archaea"/>
</dbReference>
<dbReference type="HOGENOM" id="CLU_047479_2_1_2"/>
<dbReference type="OrthoDB" id="195035at2157"/>
<dbReference type="UniPathway" id="UPA00034">
    <property type="reaction ID" value="UER00018"/>
</dbReference>
<dbReference type="Proteomes" id="UP000000253">
    <property type="component" value="Chromosome"/>
</dbReference>
<dbReference type="GO" id="GO:0005737">
    <property type="term" value="C:cytoplasm"/>
    <property type="evidence" value="ECO:0007669"/>
    <property type="project" value="UniProtKB-SubCell"/>
</dbReference>
<dbReference type="GO" id="GO:0008839">
    <property type="term" value="F:4-hydroxy-tetrahydrodipicolinate reductase"/>
    <property type="evidence" value="ECO:0007669"/>
    <property type="project" value="UniProtKB-EC"/>
</dbReference>
<dbReference type="GO" id="GO:0051287">
    <property type="term" value="F:NAD binding"/>
    <property type="evidence" value="ECO:0007669"/>
    <property type="project" value="UniProtKB-UniRule"/>
</dbReference>
<dbReference type="GO" id="GO:0050661">
    <property type="term" value="F:NADP binding"/>
    <property type="evidence" value="ECO:0007669"/>
    <property type="project" value="UniProtKB-UniRule"/>
</dbReference>
<dbReference type="GO" id="GO:0016726">
    <property type="term" value="F:oxidoreductase activity, acting on CH or CH2 groups, NAD or NADP as acceptor"/>
    <property type="evidence" value="ECO:0007669"/>
    <property type="project" value="UniProtKB-UniRule"/>
</dbReference>
<dbReference type="GO" id="GO:0019877">
    <property type="term" value="P:diaminopimelate biosynthetic process"/>
    <property type="evidence" value="ECO:0007669"/>
    <property type="project" value="UniProtKB-UniRule"/>
</dbReference>
<dbReference type="GO" id="GO:0009089">
    <property type="term" value="P:lysine biosynthetic process via diaminopimelate"/>
    <property type="evidence" value="ECO:0007669"/>
    <property type="project" value="UniProtKB-UniRule"/>
</dbReference>
<dbReference type="CDD" id="cd02274">
    <property type="entry name" value="DHDPR_N"/>
    <property type="match status" value="1"/>
</dbReference>
<dbReference type="FunFam" id="3.30.360.10:FF:000004">
    <property type="entry name" value="4-hydroxy-tetrahydrodipicolinate reductase"/>
    <property type="match status" value="1"/>
</dbReference>
<dbReference type="Gene3D" id="3.30.360.10">
    <property type="entry name" value="Dihydrodipicolinate Reductase, domain 2"/>
    <property type="match status" value="1"/>
</dbReference>
<dbReference type="Gene3D" id="3.40.50.720">
    <property type="entry name" value="NAD(P)-binding Rossmann-like Domain"/>
    <property type="match status" value="1"/>
</dbReference>
<dbReference type="HAMAP" id="MF_00102">
    <property type="entry name" value="DapB"/>
    <property type="match status" value="1"/>
</dbReference>
<dbReference type="InterPro" id="IPR022663">
    <property type="entry name" value="DapB_C"/>
</dbReference>
<dbReference type="InterPro" id="IPR000846">
    <property type="entry name" value="DapB_N"/>
</dbReference>
<dbReference type="InterPro" id="IPR022664">
    <property type="entry name" value="DapB_N_CS"/>
</dbReference>
<dbReference type="InterPro" id="IPR023940">
    <property type="entry name" value="DHDPR_bac"/>
</dbReference>
<dbReference type="InterPro" id="IPR036291">
    <property type="entry name" value="NAD(P)-bd_dom_sf"/>
</dbReference>
<dbReference type="NCBIfam" id="TIGR00036">
    <property type="entry name" value="dapB"/>
    <property type="match status" value="1"/>
</dbReference>
<dbReference type="PANTHER" id="PTHR20836:SF0">
    <property type="entry name" value="4-HYDROXY-TETRAHYDRODIPICOLINATE REDUCTASE 1, CHLOROPLASTIC-RELATED"/>
    <property type="match status" value="1"/>
</dbReference>
<dbReference type="PANTHER" id="PTHR20836">
    <property type="entry name" value="DIHYDRODIPICOLINATE REDUCTASE"/>
    <property type="match status" value="1"/>
</dbReference>
<dbReference type="Pfam" id="PF05173">
    <property type="entry name" value="DapB_C"/>
    <property type="match status" value="1"/>
</dbReference>
<dbReference type="Pfam" id="PF01113">
    <property type="entry name" value="DapB_N"/>
    <property type="match status" value="1"/>
</dbReference>
<dbReference type="PIRSF" id="PIRSF000161">
    <property type="entry name" value="DHPR"/>
    <property type="match status" value="1"/>
</dbReference>
<dbReference type="SUPFAM" id="SSF55347">
    <property type="entry name" value="Glyceraldehyde-3-phosphate dehydrogenase-like, C-terminal domain"/>
    <property type="match status" value="1"/>
</dbReference>
<dbReference type="SUPFAM" id="SSF51735">
    <property type="entry name" value="NAD(P)-binding Rossmann-fold domains"/>
    <property type="match status" value="1"/>
</dbReference>
<dbReference type="PROSITE" id="PS01298">
    <property type="entry name" value="DAPB"/>
    <property type="match status" value="1"/>
</dbReference>
<sequence>MVKVAVTGALGRMGSGIIKTITETDGLDVVAAIDIPNHPKKGLDIGELTGVGKIGVALSTSDELEVVLKESGAEVLVDFTAPAPCVNTAKTAAKLGVNLVIGTTGFTSEQRAEMENAISENKVAATISQNYAVGVNIFFKTLELLAQKLGDYDIELIEMHHKFKKDAPSGTALRAAEIIQNNLNRDSNLIFGRKGITGERTKEEICIHALRGGDVVGDHTAMFAADGERLELTHKASSRQSFISGVILAVKFVAEKKEGIYNTFDVLDLN</sequence>
<reference key="1">
    <citation type="submission" date="2007-03" db="EMBL/GenBank/DDBJ databases">
        <title>Complete sequence of chromosome of Methanococcus maripaludis C5.</title>
        <authorList>
            <consortium name="US DOE Joint Genome Institute"/>
            <person name="Copeland A."/>
            <person name="Lucas S."/>
            <person name="Lapidus A."/>
            <person name="Barry K."/>
            <person name="Glavina del Rio T."/>
            <person name="Dalin E."/>
            <person name="Tice H."/>
            <person name="Pitluck S."/>
            <person name="Chertkov O."/>
            <person name="Brettin T."/>
            <person name="Bruce D."/>
            <person name="Han C."/>
            <person name="Detter J.C."/>
            <person name="Schmutz J."/>
            <person name="Larimer F."/>
            <person name="Land M."/>
            <person name="Hauser L."/>
            <person name="Kyrpides N."/>
            <person name="Mikhailova N."/>
            <person name="Sieprawska-Lupa M."/>
            <person name="Whitman W.B."/>
            <person name="Richardson P."/>
        </authorList>
    </citation>
    <scope>NUCLEOTIDE SEQUENCE [LARGE SCALE GENOMIC DNA]</scope>
    <source>
        <strain>C5 / ATCC BAA-1333</strain>
    </source>
</reference>
<proteinExistence type="inferred from homology"/>
<evidence type="ECO:0000255" key="1">
    <source>
        <dbReference type="HAMAP-Rule" id="MF_00102"/>
    </source>
</evidence>
<evidence type="ECO:0000305" key="2"/>
<gene>
    <name evidence="1" type="primary">dapB</name>
    <name type="ordered locus">MmarC5_0730</name>
</gene>
<organism>
    <name type="scientific">Methanococcus maripaludis (strain C5 / ATCC BAA-1333)</name>
    <dbReference type="NCBI Taxonomy" id="402880"/>
    <lineage>
        <taxon>Archaea</taxon>
        <taxon>Methanobacteriati</taxon>
        <taxon>Methanobacteriota</taxon>
        <taxon>Methanomada group</taxon>
        <taxon>Methanococci</taxon>
        <taxon>Methanococcales</taxon>
        <taxon>Methanococcaceae</taxon>
        <taxon>Methanococcus</taxon>
    </lineage>
</organism>
<comment type="function">
    <text evidence="1">Catalyzes the conversion of 4-hydroxy-tetrahydrodipicolinate (HTPA) to tetrahydrodipicolinate.</text>
</comment>
<comment type="catalytic activity">
    <reaction evidence="1">
        <text>(S)-2,3,4,5-tetrahydrodipicolinate + NAD(+) + H2O = (2S,4S)-4-hydroxy-2,3,4,5-tetrahydrodipicolinate + NADH + H(+)</text>
        <dbReference type="Rhea" id="RHEA:35323"/>
        <dbReference type="ChEBI" id="CHEBI:15377"/>
        <dbReference type="ChEBI" id="CHEBI:15378"/>
        <dbReference type="ChEBI" id="CHEBI:16845"/>
        <dbReference type="ChEBI" id="CHEBI:57540"/>
        <dbReference type="ChEBI" id="CHEBI:57945"/>
        <dbReference type="ChEBI" id="CHEBI:67139"/>
        <dbReference type="EC" id="1.17.1.8"/>
    </reaction>
</comment>
<comment type="catalytic activity">
    <reaction evidence="1">
        <text>(S)-2,3,4,5-tetrahydrodipicolinate + NADP(+) + H2O = (2S,4S)-4-hydroxy-2,3,4,5-tetrahydrodipicolinate + NADPH + H(+)</text>
        <dbReference type="Rhea" id="RHEA:35331"/>
        <dbReference type="ChEBI" id="CHEBI:15377"/>
        <dbReference type="ChEBI" id="CHEBI:15378"/>
        <dbReference type="ChEBI" id="CHEBI:16845"/>
        <dbReference type="ChEBI" id="CHEBI:57783"/>
        <dbReference type="ChEBI" id="CHEBI:58349"/>
        <dbReference type="ChEBI" id="CHEBI:67139"/>
        <dbReference type="EC" id="1.17.1.8"/>
    </reaction>
</comment>
<comment type="pathway">
    <text evidence="1">Amino-acid biosynthesis; L-lysine biosynthesis via DAP pathway; (S)-tetrahydrodipicolinate from L-aspartate: step 4/4.</text>
</comment>
<comment type="subcellular location">
    <subcellularLocation>
        <location evidence="1">Cytoplasm</location>
    </subcellularLocation>
</comment>
<comment type="similarity">
    <text evidence="1">Belongs to the DapB family.</text>
</comment>
<comment type="caution">
    <text evidence="2">Was originally thought to be a dihydrodipicolinate reductase (DHDPR), catalyzing the conversion of dihydrodipicolinate to tetrahydrodipicolinate. However, it was shown in E.coli that the substrate of the enzymatic reaction is not dihydrodipicolinate (DHDP) but in fact (2S,4S)-4-hydroxy-2,3,4,5-tetrahydrodipicolinic acid (HTPA), the product released by the DapA-catalyzed reaction.</text>
</comment>
<feature type="chain" id="PRO_1000008589" description="4-hydroxy-tetrahydrodipicolinate reductase">
    <location>
        <begin position="1"/>
        <end position="270"/>
    </location>
</feature>
<feature type="active site" description="Proton donor/acceptor" evidence="1">
    <location>
        <position position="160"/>
    </location>
</feature>
<feature type="active site" description="Proton donor" evidence="1">
    <location>
        <position position="164"/>
    </location>
</feature>
<feature type="binding site" evidence="1">
    <location>
        <begin position="8"/>
        <end position="13"/>
    </location>
    <ligand>
        <name>NAD(+)</name>
        <dbReference type="ChEBI" id="CHEBI:57540"/>
    </ligand>
</feature>
<feature type="binding site" evidence="1">
    <location>
        <position position="34"/>
    </location>
    <ligand>
        <name>NAD(+)</name>
        <dbReference type="ChEBI" id="CHEBI:57540"/>
    </ligand>
</feature>
<feature type="binding site" evidence="1">
    <location>
        <begin position="102"/>
        <end position="104"/>
    </location>
    <ligand>
        <name>NAD(+)</name>
        <dbReference type="ChEBI" id="CHEBI:57540"/>
    </ligand>
</feature>
<feature type="binding site" evidence="1">
    <location>
        <begin position="128"/>
        <end position="131"/>
    </location>
    <ligand>
        <name>NAD(+)</name>
        <dbReference type="ChEBI" id="CHEBI:57540"/>
    </ligand>
</feature>
<feature type="binding site" evidence="1">
    <location>
        <position position="161"/>
    </location>
    <ligand>
        <name>(S)-2,3,4,5-tetrahydrodipicolinate</name>
        <dbReference type="ChEBI" id="CHEBI:16845"/>
    </ligand>
</feature>
<feature type="binding site" evidence="1">
    <location>
        <begin position="170"/>
        <end position="171"/>
    </location>
    <ligand>
        <name>(S)-2,3,4,5-tetrahydrodipicolinate</name>
        <dbReference type="ChEBI" id="CHEBI:16845"/>
    </ligand>
</feature>
<accession>A4FXV6</accession>
<protein>
    <recommendedName>
        <fullName evidence="1">4-hydroxy-tetrahydrodipicolinate reductase</fullName>
        <shortName evidence="1">HTPA reductase</shortName>
        <ecNumber evidence="1">1.17.1.8</ecNumber>
    </recommendedName>
</protein>
<keyword id="KW-0028">Amino-acid biosynthesis</keyword>
<keyword id="KW-0963">Cytoplasm</keyword>
<keyword id="KW-0220">Diaminopimelate biosynthesis</keyword>
<keyword id="KW-0457">Lysine biosynthesis</keyword>
<keyword id="KW-0520">NAD</keyword>
<keyword id="KW-0521">NADP</keyword>
<keyword id="KW-0560">Oxidoreductase</keyword>